<accession>C0JB01</accession>
<comment type="function">
    <text evidence="1 3">Dermonecrotic toxins cleave the phosphodiester linkage between the phosphate and headgroup of certain phospholipids (sphingolipid and lysolipid substrates), forming an alcohol (often choline) and a cyclic phosphate (By similarity). This toxin acts on sphingomyelin (SM) (By similarity). It may also act on ceramide phosphoethanolamine (CPE), lysophosphatidylcholine (LPC) and lysophosphatidylethanolamine (LPE), but not on lysophosphatidylserine (LPS), and lysophosphatidylglycerol (LPG) (By similarity). It acts by transphosphatidylation, releasing exclusively cyclic phosphate products as second products (By similarity). Induces dermonecrosis, hemolysis, increased vascular permeability, edema, inflammatory response, and platelet aggregation (By similarity).</text>
</comment>
<comment type="catalytic activity">
    <reaction evidence="1">
        <text>an N-(acyl)-sphingosylphosphocholine = an N-(acyl)-sphingosyl-1,3-cyclic phosphate + choline</text>
        <dbReference type="Rhea" id="RHEA:60652"/>
        <dbReference type="ChEBI" id="CHEBI:15354"/>
        <dbReference type="ChEBI" id="CHEBI:64583"/>
        <dbReference type="ChEBI" id="CHEBI:143892"/>
    </reaction>
</comment>
<comment type="catalytic activity">
    <reaction evidence="1">
        <text>an N-(acyl)-sphingosylphosphoethanolamine = an N-(acyl)-sphingosyl-1,3-cyclic phosphate + ethanolamine</text>
        <dbReference type="Rhea" id="RHEA:60648"/>
        <dbReference type="ChEBI" id="CHEBI:57603"/>
        <dbReference type="ChEBI" id="CHEBI:143891"/>
        <dbReference type="ChEBI" id="CHEBI:143892"/>
    </reaction>
</comment>
<comment type="catalytic activity">
    <reaction evidence="1">
        <text>a 1-acyl-sn-glycero-3-phosphocholine = a 1-acyl-sn-glycero-2,3-cyclic phosphate + choline</text>
        <dbReference type="Rhea" id="RHEA:60700"/>
        <dbReference type="ChEBI" id="CHEBI:15354"/>
        <dbReference type="ChEBI" id="CHEBI:58168"/>
        <dbReference type="ChEBI" id="CHEBI:143947"/>
    </reaction>
</comment>
<comment type="catalytic activity">
    <reaction evidence="1">
        <text>a 1-acyl-sn-glycero-3-phosphoethanolamine = a 1-acyl-sn-glycero-2,3-cyclic phosphate + ethanolamine</text>
        <dbReference type="Rhea" id="RHEA:60704"/>
        <dbReference type="ChEBI" id="CHEBI:57603"/>
        <dbReference type="ChEBI" id="CHEBI:64381"/>
        <dbReference type="ChEBI" id="CHEBI:143947"/>
    </reaction>
</comment>
<comment type="cofactor">
    <cofactor evidence="5">
        <name>Mg(2+)</name>
        <dbReference type="ChEBI" id="CHEBI:18420"/>
    </cofactor>
    <text evidence="5">Binds 1 Mg(2+) ion per subunit.</text>
</comment>
<comment type="subcellular location">
    <subcellularLocation>
        <location evidence="8">Secreted</location>
    </subcellularLocation>
</comment>
<comment type="tissue specificity">
    <text evidence="8">Expressed by the venom gland.</text>
</comment>
<comment type="similarity">
    <text evidence="7">Belongs to the arthropod phospholipase D family. Class II subfamily.</text>
</comment>
<comment type="caution">
    <text evidence="1 2 4">The most common activity assay for dermonecrotic toxins detects enzymatic activity by monitoring choline release from substrate. Liberation of choline from sphingomyelin (SM) or lysophosphatidylcholine (LPC) is commonly assumed to result from substrate hydrolysis, giving either ceramide-1-phosphate (C1P) or lysophosphatidic acid (LPA), respectively, as a second product. However, two studies from Lajoie and colleagues (2013 and 2015) report the observation of exclusive formation of cyclic phosphate products as second products, resulting from intramolecular transphosphatidylation. Cyclic phosphates have vastly different biological properties from their monoester counterparts, and they may be relevant to the pathology of brown spider envenomation.</text>
</comment>
<protein>
    <recommendedName>
        <fullName evidence="6">Dermonecrotic toxin LruSicTox-alphaIC1c</fullName>
        <ecNumber evidence="4">4.6.1.-</ecNumber>
    </recommendedName>
    <alternativeName>
        <fullName>Phospholipase D</fullName>
        <shortName>PLD</shortName>
    </alternativeName>
    <alternativeName>
        <fullName>Sphingomyelin phosphodiesterase D</fullName>
        <shortName>SMD</shortName>
        <shortName>SMase D</shortName>
        <shortName>Sphingomyelinase D</shortName>
    </alternativeName>
</protein>
<dbReference type="EC" id="4.6.1.-" evidence="4"/>
<dbReference type="EMBL" id="FJ171436">
    <property type="protein sequence ID" value="ACN48932.1"/>
    <property type="molecule type" value="mRNA"/>
</dbReference>
<dbReference type="SMR" id="C0JB01"/>
<dbReference type="GO" id="GO:0005576">
    <property type="term" value="C:extracellular region"/>
    <property type="evidence" value="ECO:0007669"/>
    <property type="project" value="UniProtKB-SubCell"/>
</dbReference>
<dbReference type="GO" id="GO:0016829">
    <property type="term" value="F:lyase activity"/>
    <property type="evidence" value="ECO:0007669"/>
    <property type="project" value="UniProtKB-KW"/>
</dbReference>
<dbReference type="GO" id="GO:0046872">
    <property type="term" value="F:metal ion binding"/>
    <property type="evidence" value="ECO:0007669"/>
    <property type="project" value="UniProtKB-KW"/>
</dbReference>
<dbReference type="GO" id="GO:0008081">
    <property type="term" value="F:phosphoric diester hydrolase activity"/>
    <property type="evidence" value="ECO:0007669"/>
    <property type="project" value="InterPro"/>
</dbReference>
<dbReference type="GO" id="GO:0090729">
    <property type="term" value="F:toxin activity"/>
    <property type="evidence" value="ECO:0007669"/>
    <property type="project" value="UniProtKB-KW"/>
</dbReference>
<dbReference type="GO" id="GO:0031640">
    <property type="term" value="P:killing of cells of another organism"/>
    <property type="evidence" value="ECO:0007669"/>
    <property type="project" value="UniProtKB-KW"/>
</dbReference>
<dbReference type="GO" id="GO:0016042">
    <property type="term" value="P:lipid catabolic process"/>
    <property type="evidence" value="ECO:0007669"/>
    <property type="project" value="UniProtKB-KW"/>
</dbReference>
<dbReference type="CDD" id="cd08576">
    <property type="entry name" value="GDPD_like_SMaseD_PLD"/>
    <property type="match status" value="1"/>
</dbReference>
<dbReference type="Gene3D" id="3.20.20.190">
    <property type="entry name" value="Phosphatidylinositol (PI) phosphodiesterase"/>
    <property type="match status" value="1"/>
</dbReference>
<dbReference type="InterPro" id="IPR017946">
    <property type="entry name" value="PLC-like_Pdiesterase_TIM-brl"/>
</dbReference>
<dbReference type="Pfam" id="PF13653">
    <property type="entry name" value="GDPD_2"/>
    <property type="match status" value="1"/>
</dbReference>
<dbReference type="SUPFAM" id="SSF51695">
    <property type="entry name" value="PLC-like phosphodiesterases"/>
    <property type="match status" value="1"/>
</dbReference>
<feature type="chain" id="PRO_0000392816" description="Dermonecrotic toxin LruSicTox-alphaIC1c">
    <location>
        <begin position="1" status="less than"/>
        <end position="273"/>
    </location>
</feature>
<feature type="active site" evidence="5">
    <location>
        <position position="5"/>
    </location>
</feature>
<feature type="active site" description="Nucleophile" evidence="5">
    <location>
        <position position="41"/>
    </location>
</feature>
<feature type="binding site" evidence="5">
    <location>
        <position position="25"/>
    </location>
    <ligand>
        <name>Mg(2+)</name>
        <dbReference type="ChEBI" id="CHEBI:18420"/>
    </ligand>
</feature>
<feature type="binding site" evidence="5">
    <location>
        <position position="27"/>
    </location>
    <ligand>
        <name>Mg(2+)</name>
        <dbReference type="ChEBI" id="CHEBI:18420"/>
    </ligand>
</feature>
<feature type="binding site" evidence="5">
    <location>
        <position position="85"/>
    </location>
    <ligand>
        <name>Mg(2+)</name>
        <dbReference type="ChEBI" id="CHEBI:18420"/>
    </ligand>
</feature>
<feature type="disulfide bond" evidence="3">
    <location>
        <begin position="45"/>
        <end position="51"/>
    </location>
</feature>
<feature type="disulfide bond" evidence="3">
    <location>
        <begin position="47"/>
        <end position="190"/>
    </location>
</feature>
<feature type="non-terminal residue">
    <location>
        <position position="1"/>
    </location>
</feature>
<reference key="1">
    <citation type="journal article" date="2009" name="Mol. Biol. Evol.">
        <title>Molecular evolution, functional variation, and proposed nomenclature of the gene family that includes sphingomyelinase D in sicariid spider venoms.</title>
        <authorList>
            <person name="Binford G.J."/>
            <person name="Bodner M.R."/>
            <person name="Cordes M.H."/>
            <person name="Baldwin K.L."/>
            <person name="Rynerson M.R."/>
            <person name="Burns S.N."/>
            <person name="Zobel-Thropp P.A."/>
        </authorList>
    </citation>
    <scope>NUCLEOTIDE SEQUENCE [MRNA]</scope>
    <scope>NOMENCLATURE</scope>
    <source>
        <tissue>Venom gland</tissue>
    </source>
</reference>
<proteinExistence type="evidence at transcript level"/>
<organism>
    <name type="scientific">Loxosceles rufescens</name>
    <name type="common">Mediterranean recluse spider</name>
    <name type="synonym">Scytodes rufescens</name>
    <dbReference type="NCBI Taxonomy" id="571528"/>
    <lineage>
        <taxon>Eukaryota</taxon>
        <taxon>Metazoa</taxon>
        <taxon>Ecdysozoa</taxon>
        <taxon>Arthropoda</taxon>
        <taxon>Chelicerata</taxon>
        <taxon>Arachnida</taxon>
        <taxon>Araneae</taxon>
        <taxon>Araneomorphae</taxon>
        <taxon>Haplogynae</taxon>
        <taxon>Scytodoidea</taxon>
        <taxon>Sicariidae</taxon>
        <taxon>Loxosceles</taxon>
    </lineage>
</organism>
<keyword id="KW-0204">Cytolysis</keyword>
<keyword id="KW-1061">Dermonecrotic toxin</keyword>
<keyword id="KW-1015">Disulfide bond</keyword>
<keyword id="KW-0354">Hemolysis</keyword>
<keyword id="KW-0442">Lipid degradation</keyword>
<keyword id="KW-0443">Lipid metabolism</keyword>
<keyword id="KW-0456">Lyase</keyword>
<keyword id="KW-0460">Magnesium</keyword>
<keyword id="KW-0479">Metal-binding</keyword>
<keyword id="KW-0964">Secreted</keyword>
<keyword id="KW-0800">Toxin</keyword>
<name>A1OC_LOXRU</name>
<evidence type="ECO:0000250" key="1">
    <source>
        <dbReference type="UniProtKB" id="A0A0D4WTV1"/>
    </source>
</evidence>
<evidence type="ECO:0000250" key="2">
    <source>
        <dbReference type="UniProtKB" id="A0A0D4WV12"/>
    </source>
</evidence>
<evidence type="ECO:0000250" key="3">
    <source>
        <dbReference type="UniProtKB" id="P0CE80"/>
    </source>
</evidence>
<evidence type="ECO:0000250" key="4">
    <source>
        <dbReference type="UniProtKB" id="Q4ZFU2"/>
    </source>
</evidence>
<evidence type="ECO:0000250" key="5">
    <source>
        <dbReference type="UniProtKB" id="Q8I914"/>
    </source>
</evidence>
<evidence type="ECO:0000303" key="6">
    <source>
    </source>
</evidence>
<evidence type="ECO:0000305" key="7"/>
<evidence type="ECO:0000305" key="8">
    <source>
    </source>
</evidence>
<sequence>WIMGHMVNSIAQIDEFVNLGANSIETDVSFDKQANPEYTYHGTPCDCGRDCLHWENFNDFLKGLRKATTPGDSKYHEKLILVVFDLKTGSLYDNQAYDAGTKLAKNLLEHYWNNGNNGGRAYIVLSIPNLNHYKLIAGFKDTLKSEGHEDLLEKVGHDFSGNDDIPDVENAYKKAGVTGHVWQSDGITNCLPRTLKRVRLAIANRDSGSGIINKVYYWTVDKRSTTRDSLDAGVDGIMTNYPDVIADVLSESAYKNKYRIATYEDNPWDTFKA</sequence>